<protein>
    <recommendedName>
        <fullName evidence="1">Putative membrane protein insertion efficiency factor</fullName>
    </recommendedName>
</protein>
<accession>A9G6D9</accession>
<gene>
    <name type="ordered locus">sce2521</name>
</gene>
<organism>
    <name type="scientific">Sorangium cellulosum (strain So ce56)</name>
    <name type="common">Polyangium cellulosum (strain So ce56)</name>
    <dbReference type="NCBI Taxonomy" id="448385"/>
    <lineage>
        <taxon>Bacteria</taxon>
        <taxon>Pseudomonadati</taxon>
        <taxon>Myxococcota</taxon>
        <taxon>Polyangia</taxon>
        <taxon>Polyangiales</taxon>
        <taxon>Polyangiaceae</taxon>
        <taxon>Sorangium</taxon>
    </lineage>
</organism>
<dbReference type="EMBL" id="AM746676">
    <property type="protein sequence ID" value="CAN92680.1"/>
    <property type="molecule type" value="Genomic_DNA"/>
</dbReference>
<dbReference type="RefSeq" id="WP_012235153.1">
    <property type="nucleotide sequence ID" value="NC_010162.1"/>
</dbReference>
<dbReference type="STRING" id="448385.sce2521"/>
<dbReference type="KEGG" id="scl:sce2521"/>
<dbReference type="eggNOG" id="COG0759">
    <property type="taxonomic scope" value="Bacteria"/>
</dbReference>
<dbReference type="HOGENOM" id="CLU_144811_2_0_7"/>
<dbReference type="OrthoDB" id="9801753at2"/>
<dbReference type="BioCyc" id="SCEL448385:SCE_RS50710-MONOMER"/>
<dbReference type="Proteomes" id="UP000002139">
    <property type="component" value="Chromosome"/>
</dbReference>
<dbReference type="GO" id="GO:0005886">
    <property type="term" value="C:plasma membrane"/>
    <property type="evidence" value="ECO:0007669"/>
    <property type="project" value="UniProtKB-SubCell"/>
</dbReference>
<dbReference type="HAMAP" id="MF_00386">
    <property type="entry name" value="UPF0161_YidD"/>
    <property type="match status" value="1"/>
</dbReference>
<dbReference type="InterPro" id="IPR002696">
    <property type="entry name" value="Membr_insert_effic_factor_YidD"/>
</dbReference>
<dbReference type="NCBIfam" id="TIGR00278">
    <property type="entry name" value="membrane protein insertion efficiency factor YidD"/>
    <property type="match status" value="1"/>
</dbReference>
<dbReference type="PANTHER" id="PTHR33383">
    <property type="entry name" value="MEMBRANE PROTEIN INSERTION EFFICIENCY FACTOR-RELATED"/>
    <property type="match status" value="1"/>
</dbReference>
<dbReference type="PANTHER" id="PTHR33383:SF1">
    <property type="entry name" value="MEMBRANE PROTEIN INSERTION EFFICIENCY FACTOR-RELATED"/>
    <property type="match status" value="1"/>
</dbReference>
<dbReference type="Pfam" id="PF01809">
    <property type="entry name" value="YidD"/>
    <property type="match status" value="1"/>
</dbReference>
<dbReference type="SMART" id="SM01234">
    <property type="entry name" value="Haemolytic"/>
    <property type="match status" value="1"/>
</dbReference>
<sequence length="127" mass="13770">MLATLLLALIRAYQMTLSRLIVALMGPVCRFEPSCSRYAAACIVDHGALRGSLLSLKRLCRCHPFHPGGFDPPPPPRLHRAAAARMPRQRDADPRDTTRCSSTGAELASHASSPCRAGFSGRVTLMD</sequence>
<keyword id="KW-0997">Cell inner membrane</keyword>
<keyword id="KW-1003">Cell membrane</keyword>
<keyword id="KW-0472">Membrane</keyword>
<keyword id="KW-1185">Reference proteome</keyword>
<evidence type="ECO:0000255" key="1">
    <source>
        <dbReference type="HAMAP-Rule" id="MF_00386"/>
    </source>
</evidence>
<evidence type="ECO:0000256" key="2">
    <source>
        <dbReference type="SAM" id="MobiDB-lite"/>
    </source>
</evidence>
<name>YIDD_SORC5</name>
<reference key="1">
    <citation type="journal article" date="2007" name="Nat. Biotechnol.">
        <title>Complete genome sequence of the myxobacterium Sorangium cellulosum.</title>
        <authorList>
            <person name="Schneiker S."/>
            <person name="Perlova O."/>
            <person name="Kaiser O."/>
            <person name="Gerth K."/>
            <person name="Alici A."/>
            <person name="Altmeyer M.O."/>
            <person name="Bartels D."/>
            <person name="Bekel T."/>
            <person name="Beyer S."/>
            <person name="Bode E."/>
            <person name="Bode H.B."/>
            <person name="Bolten C.J."/>
            <person name="Choudhuri J.V."/>
            <person name="Doss S."/>
            <person name="Elnakady Y.A."/>
            <person name="Frank B."/>
            <person name="Gaigalat L."/>
            <person name="Goesmann A."/>
            <person name="Groeger C."/>
            <person name="Gross F."/>
            <person name="Jelsbak L."/>
            <person name="Jelsbak L."/>
            <person name="Kalinowski J."/>
            <person name="Kegler C."/>
            <person name="Knauber T."/>
            <person name="Konietzny S."/>
            <person name="Kopp M."/>
            <person name="Krause L."/>
            <person name="Krug D."/>
            <person name="Linke B."/>
            <person name="Mahmud T."/>
            <person name="Martinez-Arias R."/>
            <person name="McHardy A.C."/>
            <person name="Merai M."/>
            <person name="Meyer F."/>
            <person name="Mormann S."/>
            <person name="Munoz-Dorado J."/>
            <person name="Perez J."/>
            <person name="Pradella S."/>
            <person name="Rachid S."/>
            <person name="Raddatz G."/>
            <person name="Rosenau F."/>
            <person name="Rueckert C."/>
            <person name="Sasse F."/>
            <person name="Scharfe M."/>
            <person name="Schuster S.C."/>
            <person name="Suen G."/>
            <person name="Treuner-Lange A."/>
            <person name="Velicer G.J."/>
            <person name="Vorholter F.-J."/>
            <person name="Weissman K.J."/>
            <person name="Welch R.D."/>
            <person name="Wenzel S.C."/>
            <person name="Whitworth D.E."/>
            <person name="Wilhelm S."/>
            <person name="Wittmann C."/>
            <person name="Bloecker H."/>
            <person name="Puehler A."/>
            <person name="Mueller R."/>
        </authorList>
    </citation>
    <scope>NUCLEOTIDE SEQUENCE [LARGE SCALE GENOMIC DNA]</scope>
    <source>
        <strain>So ce56</strain>
    </source>
</reference>
<comment type="function">
    <text evidence="1">Could be involved in insertion of integral membrane proteins into the membrane.</text>
</comment>
<comment type="subcellular location">
    <subcellularLocation>
        <location evidence="1">Cell inner membrane</location>
        <topology evidence="1">Peripheral membrane protein</topology>
        <orientation evidence="1">Cytoplasmic side</orientation>
    </subcellularLocation>
</comment>
<comment type="similarity">
    <text evidence="1">Belongs to the UPF0161 family.</text>
</comment>
<feature type="chain" id="PRO_1000197782" description="Putative membrane protein insertion efficiency factor">
    <location>
        <begin position="1"/>
        <end position="127"/>
    </location>
</feature>
<feature type="region of interest" description="Disordered" evidence="2">
    <location>
        <begin position="71"/>
        <end position="106"/>
    </location>
</feature>
<feature type="compositionally biased region" description="Basic and acidic residues" evidence="2">
    <location>
        <begin position="88"/>
        <end position="98"/>
    </location>
</feature>
<proteinExistence type="inferred from homology"/>